<feature type="chain" id="PRO_0000415222" description="Probable peptidoglycan glycosyltransferase FtsW">
    <location>
        <begin position="1"/>
        <end position="381"/>
    </location>
</feature>
<feature type="topological domain" description="Cytoplasmic" evidence="1">
    <location>
        <begin position="1"/>
        <end position="15"/>
    </location>
</feature>
<feature type="transmembrane region" description="Helical" evidence="2">
    <location>
        <begin position="16"/>
        <end position="36"/>
    </location>
</feature>
<feature type="topological domain" description="Periplasmic" evidence="1">
    <location>
        <begin position="37"/>
        <end position="53"/>
    </location>
</feature>
<feature type="transmembrane region" description="Helical" evidence="2">
    <location>
        <begin position="54"/>
        <end position="74"/>
    </location>
</feature>
<feature type="topological domain" description="Cytoplasmic" evidence="1">
    <location>
        <begin position="75"/>
        <end position="81"/>
    </location>
</feature>
<feature type="transmembrane region" description="Helical" evidence="2">
    <location>
        <begin position="82"/>
        <end position="102"/>
    </location>
</feature>
<feature type="topological domain" description="Periplasmic" evidence="1">
    <location>
        <begin position="103"/>
        <end position="109"/>
    </location>
</feature>
<feature type="transmembrane region" description="Helical" evidence="2">
    <location>
        <begin position="110"/>
        <end position="130"/>
    </location>
</feature>
<feature type="topological domain" description="Cytoplasmic" evidence="1">
    <location>
        <begin position="131"/>
        <end position="143"/>
    </location>
</feature>
<feature type="transmembrane region" description="Helical" evidence="2">
    <location>
        <begin position="144"/>
        <end position="164"/>
    </location>
</feature>
<feature type="topological domain" description="Periplasmic" evidence="1">
    <location>
        <begin position="165"/>
        <end position="166"/>
    </location>
</feature>
<feature type="transmembrane region" description="Helical" evidence="2">
    <location>
        <begin position="167"/>
        <end position="187"/>
    </location>
</feature>
<feature type="transmembrane region" description="Helical" evidence="2">
    <location>
        <begin position="188"/>
        <end position="208"/>
    </location>
</feature>
<feature type="topological domain" description="Periplasmic" evidence="1">
    <location>
        <begin position="209"/>
        <end position="278"/>
    </location>
</feature>
<feature type="transmembrane region" description="Helical" evidence="2">
    <location>
        <begin position="279"/>
        <end position="299"/>
    </location>
</feature>
<feature type="topological domain" description="Cytoplasmic" evidence="1">
    <location>
        <begin position="300"/>
        <end position="317"/>
    </location>
</feature>
<feature type="transmembrane region" description="Helical" evidence="2">
    <location>
        <begin position="318"/>
        <end position="338"/>
    </location>
</feature>
<feature type="topological domain" description="Periplasmic" evidence="1">
    <location>
        <begin position="339"/>
        <end position="343"/>
    </location>
</feature>
<feature type="transmembrane region" description="Helical" evidence="2">
    <location>
        <begin position="344"/>
        <end position="364"/>
    </location>
</feature>
<feature type="topological domain" description="Cytoplasmic" evidence="1">
    <location>
        <begin position="365"/>
        <end position="381"/>
    </location>
</feature>
<protein>
    <recommendedName>
        <fullName evidence="2">Probable peptidoglycan glycosyltransferase FtsW</fullName>
        <shortName evidence="2">PGT</shortName>
        <ecNumber evidence="2">2.4.99.28</ecNumber>
    </recommendedName>
    <alternativeName>
        <fullName evidence="2">Cell division protein FtsW</fullName>
    </alternativeName>
    <alternativeName>
        <fullName evidence="2">Cell wall polymerase</fullName>
    </alternativeName>
    <alternativeName>
        <fullName evidence="2">Peptidoglycan polymerase</fullName>
        <shortName evidence="2">PG polymerase</shortName>
    </alternativeName>
</protein>
<proteinExistence type="inferred from homology"/>
<sequence>MNNKKKIVKIFFYDKILFFLLISLSIIGIIIVSSASISFGIRLHNDYFYFAKRNLLYFFLSFFLFFQIIRIPINQLEKYNKIALLINLFLLIIVFIIGNSINGAIRWIKIGFFSIQPSECSKLILFFYISDYIVKKNKELKNKLWGFLKPIIIMLIFVILLLMQPDLGNSLILFLTTLLLFFLAGINLWKCCFMFLFGLLTIFILIIFKPYRIRRILSFLDPWEDPFNSGYQLTQSLMALGRGKIIGTGLGNSIQKLEYLPEAYTDFIFSILGEELGYIGSIIILIMLFFVIFRIFLIGKNSFIQKKFFSGYFSFSVGIWISLQTIMNVGGVIGILPIKGLTLPFISYGGSSLITIFSAIAIVIRSDFELRINKYQAYLKQ</sequence>
<accession>Q8D2Z5</accession>
<comment type="function">
    <text evidence="2">Peptidoglycan polymerase that is essential for cell division.</text>
</comment>
<comment type="catalytic activity">
    <reaction evidence="2">
        <text>[GlcNAc-(1-&gt;4)-Mur2Ac(oyl-L-Ala-gamma-D-Glu-L-Lys-D-Ala-D-Ala)](n)-di-trans,octa-cis-undecaprenyl diphosphate + beta-D-GlcNAc-(1-&gt;4)-Mur2Ac(oyl-L-Ala-gamma-D-Glu-L-Lys-D-Ala-D-Ala)-di-trans,octa-cis-undecaprenyl diphosphate = [GlcNAc-(1-&gt;4)-Mur2Ac(oyl-L-Ala-gamma-D-Glu-L-Lys-D-Ala-D-Ala)](n+1)-di-trans,octa-cis-undecaprenyl diphosphate + di-trans,octa-cis-undecaprenyl diphosphate + H(+)</text>
        <dbReference type="Rhea" id="RHEA:23708"/>
        <dbReference type="Rhea" id="RHEA-COMP:9602"/>
        <dbReference type="Rhea" id="RHEA-COMP:9603"/>
        <dbReference type="ChEBI" id="CHEBI:15378"/>
        <dbReference type="ChEBI" id="CHEBI:58405"/>
        <dbReference type="ChEBI" id="CHEBI:60033"/>
        <dbReference type="ChEBI" id="CHEBI:78435"/>
        <dbReference type="EC" id="2.4.99.28"/>
    </reaction>
</comment>
<comment type="pathway">
    <text evidence="2">Cell wall biogenesis; peptidoglycan biosynthesis.</text>
</comment>
<comment type="subcellular location">
    <subcellularLocation>
        <location evidence="2">Cell inner membrane</location>
        <topology evidence="2">Multi-pass membrane protein</topology>
    </subcellularLocation>
    <text evidence="2">Localizes to the division septum.</text>
</comment>
<comment type="similarity">
    <text evidence="2">Belongs to the SEDS family. FtsW subfamily.</text>
</comment>
<keyword id="KW-0131">Cell cycle</keyword>
<keyword id="KW-0132">Cell division</keyword>
<keyword id="KW-0997">Cell inner membrane</keyword>
<keyword id="KW-1003">Cell membrane</keyword>
<keyword id="KW-0133">Cell shape</keyword>
<keyword id="KW-0961">Cell wall biogenesis/degradation</keyword>
<keyword id="KW-0328">Glycosyltransferase</keyword>
<keyword id="KW-0472">Membrane</keyword>
<keyword id="KW-0573">Peptidoglycan synthesis</keyword>
<keyword id="KW-1185">Reference proteome</keyword>
<keyword id="KW-0808">Transferase</keyword>
<keyword id="KW-0812">Transmembrane</keyword>
<keyword id="KW-1133">Transmembrane helix</keyword>
<gene>
    <name evidence="2" type="primary">ftsW</name>
    <name type="ordered locus">WIGBR2070</name>
</gene>
<name>FTSW_WIGBR</name>
<dbReference type="EC" id="2.4.99.28" evidence="2"/>
<dbReference type="EMBL" id="BA000021">
    <property type="protein sequence ID" value="BAC24353.1"/>
    <property type="molecule type" value="Genomic_DNA"/>
</dbReference>
<dbReference type="SMR" id="Q8D2Z5"/>
<dbReference type="STRING" id="36870.gene:10368695"/>
<dbReference type="KEGG" id="wbr:ftsW"/>
<dbReference type="eggNOG" id="COG0772">
    <property type="taxonomic scope" value="Bacteria"/>
</dbReference>
<dbReference type="HOGENOM" id="CLU_029243_1_1_6"/>
<dbReference type="OrthoDB" id="9768187at2"/>
<dbReference type="UniPathway" id="UPA00219"/>
<dbReference type="Proteomes" id="UP000000562">
    <property type="component" value="Chromosome"/>
</dbReference>
<dbReference type="GO" id="GO:0032153">
    <property type="term" value="C:cell division site"/>
    <property type="evidence" value="ECO:0007669"/>
    <property type="project" value="UniProtKB-UniRule"/>
</dbReference>
<dbReference type="GO" id="GO:0005886">
    <property type="term" value="C:plasma membrane"/>
    <property type="evidence" value="ECO:0007669"/>
    <property type="project" value="UniProtKB-SubCell"/>
</dbReference>
<dbReference type="GO" id="GO:0015648">
    <property type="term" value="F:lipid-linked peptidoglycan transporter activity"/>
    <property type="evidence" value="ECO:0007669"/>
    <property type="project" value="TreeGrafter"/>
</dbReference>
<dbReference type="GO" id="GO:0008955">
    <property type="term" value="F:peptidoglycan glycosyltransferase activity"/>
    <property type="evidence" value="ECO:0007669"/>
    <property type="project" value="UniProtKB-UniRule"/>
</dbReference>
<dbReference type="GO" id="GO:0071555">
    <property type="term" value="P:cell wall organization"/>
    <property type="evidence" value="ECO:0007669"/>
    <property type="project" value="UniProtKB-KW"/>
</dbReference>
<dbReference type="GO" id="GO:0043093">
    <property type="term" value="P:FtsZ-dependent cytokinesis"/>
    <property type="evidence" value="ECO:0007669"/>
    <property type="project" value="UniProtKB-UniRule"/>
</dbReference>
<dbReference type="GO" id="GO:0009252">
    <property type="term" value="P:peptidoglycan biosynthetic process"/>
    <property type="evidence" value="ECO:0007669"/>
    <property type="project" value="UniProtKB-UniRule"/>
</dbReference>
<dbReference type="GO" id="GO:0008360">
    <property type="term" value="P:regulation of cell shape"/>
    <property type="evidence" value="ECO:0007669"/>
    <property type="project" value="UniProtKB-KW"/>
</dbReference>
<dbReference type="HAMAP" id="MF_00913">
    <property type="entry name" value="PGT_FtsW_proteobact"/>
    <property type="match status" value="1"/>
</dbReference>
<dbReference type="InterPro" id="IPR018365">
    <property type="entry name" value="Cell_cycle_FtsW-rel_CS"/>
</dbReference>
<dbReference type="InterPro" id="IPR013437">
    <property type="entry name" value="FtsW"/>
</dbReference>
<dbReference type="InterPro" id="IPR001182">
    <property type="entry name" value="FtsW/RodA"/>
</dbReference>
<dbReference type="NCBIfam" id="TIGR02614">
    <property type="entry name" value="ftsW"/>
    <property type="match status" value="1"/>
</dbReference>
<dbReference type="PANTHER" id="PTHR30474">
    <property type="entry name" value="CELL CYCLE PROTEIN"/>
    <property type="match status" value="1"/>
</dbReference>
<dbReference type="PANTHER" id="PTHR30474:SF2">
    <property type="entry name" value="PEPTIDOGLYCAN GLYCOSYLTRANSFERASE FTSW-RELATED"/>
    <property type="match status" value="1"/>
</dbReference>
<dbReference type="Pfam" id="PF01098">
    <property type="entry name" value="FTSW_RODA_SPOVE"/>
    <property type="match status" value="1"/>
</dbReference>
<dbReference type="PROSITE" id="PS00428">
    <property type="entry name" value="FTSW_RODA_SPOVE"/>
    <property type="match status" value="1"/>
</dbReference>
<organism>
    <name type="scientific">Wigglesworthia glossinidia brevipalpis</name>
    <dbReference type="NCBI Taxonomy" id="36870"/>
    <lineage>
        <taxon>Bacteria</taxon>
        <taxon>Pseudomonadati</taxon>
        <taxon>Pseudomonadota</taxon>
        <taxon>Gammaproteobacteria</taxon>
        <taxon>Enterobacterales</taxon>
        <taxon>Erwiniaceae</taxon>
        <taxon>Wigglesworthia</taxon>
    </lineage>
</organism>
<evidence type="ECO:0000255" key="1"/>
<evidence type="ECO:0000255" key="2">
    <source>
        <dbReference type="HAMAP-Rule" id="MF_00913"/>
    </source>
</evidence>
<reference key="1">
    <citation type="journal article" date="2002" name="Nat. Genet.">
        <title>Genome sequence of the endocellular obligate symbiont of tsetse flies, Wigglesworthia glossinidia.</title>
        <authorList>
            <person name="Akman L."/>
            <person name="Yamashita A."/>
            <person name="Watanabe H."/>
            <person name="Oshima K."/>
            <person name="Shiba T."/>
            <person name="Hattori M."/>
            <person name="Aksoy S."/>
        </authorList>
    </citation>
    <scope>NUCLEOTIDE SEQUENCE [LARGE SCALE GENOMIC DNA]</scope>
</reference>